<feature type="chain" id="PRO_0000416678" description="Putative aryl-alcohol dehydrogenase C750.01">
    <location>
        <begin position="1"/>
        <end position="325"/>
    </location>
</feature>
<keyword id="KW-0560">Oxidoreductase</keyword>
<keyword id="KW-1185">Reference proteome</keyword>
<dbReference type="EC" id="1.1.1.-"/>
<dbReference type="EMBL" id="CU329670">
    <property type="protein sequence ID" value="CAO77652.2"/>
    <property type="molecule type" value="Genomic_DNA"/>
</dbReference>
<dbReference type="RefSeq" id="XP_004001804.1">
    <property type="nucleotide sequence ID" value="XM_004001755.1"/>
</dbReference>
<dbReference type="SMR" id="G2TRN6"/>
<dbReference type="BioGRID" id="280646">
    <property type="interactions" value="23"/>
</dbReference>
<dbReference type="FunCoup" id="G2TRN6">
    <property type="interactions" value="26"/>
</dbReference>
<dbReference type="STRING" id="284812.G2TRN6"/>
<dbReference type="iPTMnet" id="G2TRN6"/>
<dbReference type="PaxDb" id="4896-SPAC750.01.1"/>
<dbReference type="EnsemblFungi" id="SPAC750.01.1">
    <property type="protein sequence ID" value="SPAC750.01.1:pep"/>
    <property type="gene ID" value="SPAC750.01"/>
</dbReference>
<dbReference type="PomBase" id="SPAC750.01"/>
<dbReference type="VEuPathDB" id="FungiDB:SPAC750.01"/>
<dbReference type="eggNOG" id="KOG1575">
    <property type="taxonomic scope" value="Eukaryota"/>
</dbReference>
<dbReference type="HOGENOM" id="CLU_023205_2_0_1"/>
<dbReference type="InParanoid" id="G2TRN6"/>
<dbReference type="OMA" id="HIMDSVE"/>
<dbReference type="PRO" id="PR:G2TRN6"/>
<dbReference type="Proteomes" id="UP000002485">
    <property type="component" value="Chromosome I"/>
</dbReference>
<dbReference type="GO" id="GO:0016491">
    <property type="term" value="F:oxidoreductase activity"/>
    <property type="evidence" value="ECO:0000255"/>
    <property type="project" value="PomBase"/>
</dbReference>
<dbReference type="CDD" id="cd19079">
    <property type="entry name" value="AKR_EcYajO-like"/>
    <property type="match status" value="1"/>
</dbReference>
<dbReference type="FunFam" id="3.20.20.100:FF:000004">
    <property type="entry name" value="Oxidoreductase, aldo/keto reductase"/>
    <property type="match status" value="1"/>
</dbReference>
<dbReference type="Gene3D" id="3.20.20.100">
    <property type="entry name" value="NADP-dependent oxidoreductase domain"/>
    <property type="match status" value="1"/>
</dbReference>
<dbReference type="InterPro" id="IPR050523">
    <property type="entry name" value="AKR_Detox_Biosynth"/>
</dbReference>
<dbReference type="InterPro" id="IPR023210">
    <property type="entry name" value="NADP_OxRdtase_dom"/>
</dbReference>
<dbReference type="InterPro" id="IPR036812">
    <property type="entry name" value="NADP_OxRdtase_dom_sf"/>
</dbReference>
<dbReference type="PANTHER" id="PTHR43364:SF15">
    <property type="entry name" value="ARYL-ALCOHOL DEHYDROGENASE AAD16-RELATED"/>
    <property type="match status" value="1"/>
</dbReference>
<dbReference type="PANTHER" id="PTHR43364">
    <property type="entry name" value="NADH-SPECIFIC METHYLGLYOXAL REDUCTASE-RELATED"/>
    <property type="match status" value="1"/>
</dbReference>
<dbReference type="Pfam" id="PF00248">
    <property type="entry name" value="Aldo_ket_red"/>
    <property type="match status" value="1"/>
</dbReference>
<dbReference type="SUPFAM" id="SSF51430">
    <property type="entry name" value="NAD(P)-linked oxidoreductase"/>
    <property type="match status" value="1"/>
</dbReference>
<accession>G2TRN6</accession>
<proteinExistence type="inferred from homology"/>
<comment type="similarity">
    <text evidence="1">Belongs to the aldo/keto reductase family. Aldo/keto reductase 2 subfamily.</text>
</comment>
<organism>
    <name type="scientific">Schizosaccharomyces pombe (strain 972 / ATCC 24843)</name>
    <name type="common">Fission yeast</name>
    <dbReference type="NCBI Taxonomy" id="284812"/>
    <lineage>
        <taxon>Eukaryota</taxon>
        <taxon>Fungi</taxon>
        <taxon>Dikarya</taxon>
        <taxon>Ascomycota</taxon>
        <taxon>Taphrinomycotina</taxon>
        <taxon>Schizosaccharomycetes</taxon>
        <taxon>Schizosaccharomycetales</taxon>
        <taxon>Schizosaccharomycetaceae</taxon>
        <taxon>Schizosaccharomyces</taxon>
    </lineage>
</organism>
<evidence type="ECO:0000305" key="1"/>
<name>YLZ1_SCHPO</name>
<gene>
    <name type="ORF">SPAC750.01</name>
</gene>
<protein>
    <recommendedName>
        <fullName>Putative aryl-alcohol dehydrogenase C750.01</fullName>
        <ecNumber>1.1.1.-</ecNumber>
    </recommendedName>
</protein>
<reference key="1">
    <citation type="journal article" date="2002" name="Nature">
        <title>The genome sequence of Schizosaccharomyces pombe.</title>
        <authorList>
            <person name="Wood V."/>
            <person name="Gwilliam R."/>
            <person name="Rajandream M.A."/>
            <person name="Lyne M.H."/>
            <person name="Lyne R."/>
            <person name="Stewart A."/>
            <person name="Sgouros J.G."/>
            <person name="Peat N."/>
            <person name="Hayles J."/>
            <person name="Baker S.G."/>
            <person name="Basham D."/>
            <person name="Bowman S."/>
            <person name="Brooks K."/>
            <person name="Brown D."/>
            <person name="Brown S."/>
            <person name="Chillingworth T."/>
            <person name="Churcher C.M."/>
            <person name="Collins M."/>
            <person name="Connor R."/>
            <person name="Cronin A."/>
            <person name="Davis P."/>
            <person name="Feltwell T."/>
            <person name="Fraser A."/>
            <person name="Gentles S."/>
            <person name="Goble A."/>
            <person name="Hamlin N."/>
            <person name="Harris D.E."/>
            <person name="Hidalgo J."/>
            <person name="Hodgson G."/>
            <person name="Holroyd S."/>
            <person name="Hornsby T."/>
            <person name="Howarth S."/>
            <person name="Huckle E.J."/>
            <person name="Hunt S."/>
            <person name="Jagels K."/>
            <person name="James K.D."/>
            <person name="Jones L."/>
            <person name="Jones M."/>
            <person name="Leather S."/>
            <person name="McDonald S."/>
            <person name="McLean J."/>
            <person name="Mooney P."/>
            <person name="Moule S."/>
            <person name="Mungall K.L."/>
            <person name="Murphy L.D."/>
            <person name="Niblett D."/>
            <person name="Odell C."/>
            <person name="Oliver K."/>
            <person name="O'Neil S."/>
            <person name="Pearson D."/>
            <person name="Quail M.A."/>
            <person name="Rabbinowitsch E."/>
            <person name="Rutherford K.M."/>
            <person name="Rutter S."/>
            <person name="Saunders D."/>
            <person name="Seeger K."/>
            <person name="Sharp S."/>
            <person name="Skelton J."/>
            <person name="Simmonds M.N."/>
            <person name="Squares R."/>
            <person name="Squares S."/>
            <person name="Stevens K."/>
            <person name="Taylor K."/>
            <person name="Taylor R.G."/>
            <person name="Tivey A."/>
            <person name="Walsh S.V."/>
            <person name="Warren T."/>
            <person name="Whitehead S."/>
            <person name="Woodward J.R."/>
            <person name="Volckaert G."/>
            <person name="Aert R."/>
            <person name="Robben J."/>
            <person name="Grymonprez B."/>
            <person name="Weltjens I."/>
            <person name="Vanstreels E."/>
            <person name="Rieger M."/>
            <person name="Schaefer M."/>
            <person name="Mueller-Auer S."/>
            <person name="Gabel C."/>
            <person name="Fuchs M."/>
            <person name="Duesterhoeft A."/>
            <person name="Fritzc C."/>
            <person name="Holzer E."/>
            <person name="Moestl D."/>
            <person name="Hilbert H."/>
            <person name="Borzym K."/>
            <person name="Langer I."/>
            <person name="Beck A."/>
            <person name="Lehrach H."/>
            <person name="Reinhardt R."/>
            <person name="Pohl T.M."/>
            <person name="Eger P."/>
            <person name="Zimmermann W."/>
            <person name="Wedler H."/>
            <person name="Wambutt R."/>
            <person name="Purnelle B."/>
            <person name="Goffeau A."/>
            <person name="Cadieu E."/>
            <person name="Dreano S."/>
            <person name="Gloux S."/>
            <person name="Lelaure V."/>
            <person name="Mottier S."/>
            <person name="Galibert F."/>
            <person name="Aves S.J."/>
            <person name="Xiang Z."/>
            <person name="Hunt C."/>
            <person name="Moore K."/>
            <person name="Hurst S.M."/>
            <person name="Lucas M."/>
            <person name="Rochet M."/>
            <person name="Gaillardin C."/>
            <person name="Tallada V.A."/>
            <person name="Garzon A."/>
            <person name="Thode G."/>
            <person name="Daga R.R."/>
            <person name="Cruzado L."/>
            <person name="Jimenez J."/>
            <person name="Sanchez M."/>
            <person name="del Rey F."/>
            <person name="Benito J."/>
            <person name="Dominguez A."/>
            <person name="Revuelta J.L."/>
            <person name="Moreno S."/>
            <person name="Armstrong J."/>
            <person name="Forsburg S.L."/>
            <person name="Cerutti L."/>
            <person name="Lowe T."/>
            <person name="McCombie W.R."/>
            <person name="Paulsen I."/>
            <person name="Potashkin J."/>
            <person name="Shpakovski G.V."/>
            <person name="Ussery D."/>
            <person name="Barrell B.G."/>
            <person name="Nurse P."/>
        </authorList>
    </citation>
    <scope>NUCLEOTIDE SEQUENCE [LARGE SCALE GENOMIC DNA]</scope>
    <source>
        <strain>972 / ATCC 24843</strain>
    </source>
</reference>
<reference key="2">
    <citation type="journal article" date="2011" name="Science">
        <title>Comparative functional genomics of the fission yeasts.</title>
        <authorList>
            <person name="Rhind N."/>
            <person name="Chen Z."/>
            <person name="Yassour M."/>
            <person name="Thompson D.A."/>
            <person name="Haas B.J."/>
            <person name="Habib N."/>
            <person name="Wapinski I."/>
            <person name="Roy S."/>
            <person name="Lin M.F."/>
            <person name="Heiman D.I."/>
            <person name="Young S.K."/>
            <person name="Furuya K."/>
            <person name="Guo Y."/>
            <person name="Pidoux A."/>
            <person name="Chen H.M."/>
            <person name="Robbertse B."/>
            <person name="Goldberg J.M."/>
            <person name="Aoki K."/>
            <person name="Bayne E.H."/>
            <person name="Berlin A.M."/>
            <person name="Desjardins C.A."/>
            <person name="Dobbs E."/>
            <person name="Dukaj L."/>
            <person name="Fan L."/>
            <person name="FitzGerald M.G."/>
            <person name="French C."/>
            <person name="Gujja S."/>
            <person name="Hansen K."/>
            <person name="Keifenheim D."/>
            <person name="Levin J.Z."/>
            <person name="Mosher R.A."/>
            <person name="Mueller C.A."/>
            <person name="Pfiffner J."/>
            <person name="Priest M."/>
            <person name="Russ C."/>
            <person name="Smialowska A."/>
            <person name="Swoboda P."/>
            <person name="Sykes S.M."/>
            <person name="Vaughn M."/>
            <person name="Vengrova S."/>
            <person name="Yoder R."/>
            <person name="Zeng Q."/>
            <person name="Allshire R."/>
            <person name="Baulcombe D."/>
            <person name="Birren B.W."/>
            <person name="Brown W."/>
            <person name="Ekwall K."/>
            <person name="Kellis M."/>
            <person name="Leatherwood J."/>
            <person name="Levin H."/>
            <person name="Margalit H."/>
            <person name="Martienssen R."/>
            <person name="Nieduszynski C.A."/>
            <person name="Spatafora J.W."/>
            <person name="Friedman N."/>
            <person name="Dalgaard J.Z."/>
            <person name="Baumann P."/>
            <person name="Niki H."/>
            <person name="Regev A."/>
            <person name="Nusbaum C."/>
        </authorList>
    </citation>
    <scope>REVISION OF GENE MODEL</scope>
</reference>
<sequence length="325" mass="37360">MSFGKKEYWEDWVLEEEDEVFKIMKAAYDAGIRTFDTANIYSAGVSEELVGKFIRKYEIPRSSIVIMSKCFSPVRKDLIKLYMDLSSRGVQLHDSPELANQCGLSRKHIFDAVQDSVKRLGTYIDVLQIHRYDPHVSAEEVMRALNDVVESGKVRYIGASTMRYYQFIELQNTAEKHGWHKFISMQNYHNLLYREEEREMIPYCQKTGVGLIPWSPLARGLLTRSIDANEETIRSKTDLYTRALEFGAGYKAILSRVEELAKKYNVSMATLATAWSLHKGDYPIVGISKVERLQDALASVTLKLNEEDIKYLEEPYCPVPIQGEI</sequence>